<dbReference type="EC" id="1.3.1.56"/>
<dbReference type="EMBL" id="Y07655">
    <property type="protein sequence ID" value="CAA68939.1"/>
    <property type="molecule type" value="Genomic_DNA"/>
</dbReference>
<dbReference type="SMR" id="P72220"/>
<dbReference type="UniPathway" id="UPA00155">
    <property type="reaction ID" value="UER00251"/>
</dbReference>
<dbReference type="GO" id="GO:0018509">
    <property type="term" value="F:cis-2,3-dihydrobiphenyl-2,3-diol dehydrogenase activity"/>
    <property type="evidence" value="ECO:0007669"/>
    <property type="project" value="UniProtKB-EC"/>
</dbReference>
<dbReference type="GO" id="GO:0050664">
    <property type="term" value="F:oxidoreductase activity, acting on NAD(P)H, oxygen as acceptor"/>
    <property type="evidence" value="ECO:0007669"/>
    <property type="project" value="TreeGrafter"/>
</dbReference>
<dbReference type="GO" id="GO:0009056">
    <property type="term" value="P:catabolic process"/>
    <property type="evidence" value="ECO:0007669"/>
    <property type="project" value="UniProtKB-KW"/>
</dbReference>
<dbReference type="CDD" id="cd05348">
    <property type="entry name" value="BphB-like_SDR_c"/>
    <property type="match status" value="1"/>
</dbReference>
<dbReference type="FunFam" id="3.40.50.720:FF:000084">
    <property type="entry name" value="Short-chain dehydrogenase reductase"/>
    <property type="match status" value="1"/>
</dbReference>
<dbReference type="Gene3D" id="3.40.50.720">
    <property type="entry name" value="NAD(P)-binding Rossmann-like Domain"/>
    <property type="match status" value="1"/>
</dbReference>
<dbReference type="InterPro" id="IPR047950">
    <property type="entry name" value="BphB-like_SDR"/>
</dbReference>
<dbReference type="InterPro" id="IPR017711">
    <property type="entry name" value="BphB_TodD"/>
</dbReference>
<dbReference type="InterPro" id="IPR036291">
    <property type="entry name" value="NAD(P)-bd_dom_sf"/>
</dbReference>
<dbReference type="InterPro" id="IPR020904">
    <property type="entry name" value="Sc_DH/Rdtase_CS"/>
</dbReference>
<dbReference type="InterPro" id="IPR002347">
    <property type="entry name" value="SDR_fam"/>
</dbReference>
<dbReference type="NCBIfam" id="TIGR03325">
    <property type="entry name" value="BphB_TodD"/>
    <property type="match status" value="1"/>
</dbReference>
<dbReference type="NCBIfam" id="NF004849">
    <property type="entry name" value="PRK06200.1"/>
    <property type="match status" value="1"/>
</dbReference>
<dbReference type="PANTHER" id="PTHR43008">
    <property type="entry name" value="BENZIL REDUCTASE"/>
    <property type="match status" value="1"/>
</dbReference>
<dbReference type="PANTHER" id="PTHR43008:SF4">
    <property type="entry name" value="CHAIN DEHYDROGENASE, PUTATIVE (AFU_ORTHOLOGUE AFUA_4G08710)-RELATED"/>
    <property type="match status" value="1"/>
</dbReference>
<dbReference type="Pfam" id="PF00106">
    <property type="entry name" value="adh_short"/>
    <property type="match status" value="1"/>
</dbReference>
<dbReference type="PRINTS" id="PR00081">
    <property type="entry name" value="GDHRDH"/>
</dbReference>
<dbReference type="PRINTS" id="PR00080">
    <property type="entry name" value="SDRFAMILY"/>
</dbReference>
<dbReference type="SUPFAM" id="SSF51735">
    <property type="entry name" value="NAD(P)-binding Rossmann-fold domains"/>
    <property type="match status" value="1"/>
</dbReference>
<dbReference type="PROSITE" id="PS00061">
    <property type="entry name" value="ADH_SHORT"/>
    <property type="match status" value="1"/>
</dbReference>
<protein>
    <recommendedName>
        <fullName>Cis-2,3-dihydrobiphenyl-2,3-diol dehydrogenase</fullName>
        <ecNumber>1.3.1.56</ecNumber>
    </recommendedName>
    <alternativeName>
        <fullName>2,3-dihydro-2,3-dihydroxybiphenyl dehydrogenase</fullName>
    </alternativeName>
    <alternativeName>
        <fullName>2,3-dihydroxy-4-phenylhexa-4,6-diene dehydrogenase</fullName>
    </alternativeName>
    <alternativeName>
        <fullName>Biphenyl-2,3-dihydro-2,3-diol dehydrogenase</fullName>
    </alternativeName>
    <alternativeName>
        <fullName>Biphenyl-cis-diol dehydrogenase</fullName>
    </alternativeName>
</protein>
<gene>
    <name type="primary">bphB</name>
</gene>
<name>BPHB_PSEPU</name>
<evidence type="ECO:0000250" key="1"/>
<evidence type="ECO:0000255" key="2">
    <source>
        <dbReference type="PROSITE-ProRule" id="PRU10001"/>
    </source>
</evidence>
<evidence type="ECO:0000305" key="3"/>
<feature type="chain" id="PRO_0000054535" description="Cis-2,3-dihydrobiphenyl-2,3-diol dehydrogenase">
    <location>
        <begin position="1"/>
        <end position="277"/>
    </location>
</feature>
<feature type="active site" description="Proton acceptor" evidence="2">
    <location>
        <position position="155"/>
    </location>
</feature>
<feature type="binding site" evidence="1">
    <location>
        <begin position="9"/>
        <end position="33"/>
    </location>
    <ligand>
        <name>NAD(+)</name>
        <dbReference type="ChEBI" id="CHEBI:57540"/>
    </ligand>
</feature>
<feature type="binding site" evidence="1">
    <location>
        <position position="142"/>
    </location>
    <ligand>
        <name>substrate</name>
    </ligand>
</feature>
<comment type="catalytic activity">
    <reaction>
        <text>(2R,3S)-3-phenylcyclohexa-3,5-diene-1,2-diol + NAD(+) = biphenyl-2,3-diol + NADH + H(+)</text>
        <dbReference type="Rhea" id="RHEA:17033"/>
        <dbReference type="ChEBI" id="CHEBI:15378"/>
        <dbReference type="ChEBI" id="CHEBI:16205"/>
        <dbReference type="ChEBI" id="CHEBI:32922"/>
        <dbReference type="ChEBI" id="CHEBI:57540"/>
        <dbReference type="ChEBI" id="CHEBI:57945"/>
        <dbReference type="EC" id="1.3.1.56"/>
    </reaction>
</comment>
<comment type="pathway">
    <text>Xenobiotic degradation; biphenyl degradation; 2-hydroxy-2,4-pentadienoate and benzoate from biphenyl: step 2/4.</text>
</comment>
<comment type="subunit">
    <text evidence="3">Homotetramer.</text>
</comment>
<comment type="similarity">
    <text evidence="3">Belongs to the short-chain dehydrogenases/reductases (SDR) family.</text>
</comment>
<sequence length="277" mass="28907">MKLTGEVVLITGGASGLGRALVDRFVAERAKVAVLDKSAERLAQLETDHGDNVLGVTGDVRSLEDQKQAASRCVAKFGKIDTLIPNAGIWDYSTALIDLPEESLDAAFDEVFHINVKGYIHAVKACLPALVASRGNVIFTISNAGFYPNGGGPLYTAAKHAVVGLVRELAFELAPYVRVNGVGPGGINSDLRGPSSLGMGGKAISTVPLADMLKSVLPIGRMPEAEEYTGAYVFFATRGDAAPATGALLNYDGGLGVRGFFSGAGGNDLLERLNINS</sequence>
<keyword id="KW-0058">Aromatic hydrocarbons catabolism</keyword>
<keyword id="KW-0520">NAD</keyword>
<keyword id="KW-0560">Oxidoreductase</keyword>
<accession>P72220</accession>
<organism>
    <name type="scientific">Pseudomonas putida</name>
    <name type="common">Arthrobacter siderocapsulatus</name>
    <dbReference type="NCBI Taxonomy" id="303"/>
    <lineage>
        <taxon>Bacteria</taxon>
        <taxon>Pseudomonadati</taxon>
        <taxon>Pseudomonadota</taxon>
        <taxon>Gammaproteobacteria</taxon>
        <taxon>Pseudomonadales</taxon>
        <taxon>Pseudomonadaceae</taxon>
        <taxon>Pseudomonas</taxon>
    </lineage>
</organism>
<proteinExistence type="inferred from homology"/>
<reference key="1">
    <citation type="journal article" date="1997" name="FEMS Microbiol. Lett.">
        <title>Nucleotide sequence of the gene encoding cis-biphenyl dihydrodiol dehydrogenase (bphB) and the expression of an active recombinant His-tagged bphB gene product from a PCB degrading bacterium, Pseudomonas putida OU83.</title>
        <authorList>
            <person name="Khan A.A."/>
            <person name="Wang R.F."/>
            <person name="Nawaz M.S."/>
            <person name="Cerniglia C.E."/>
        </authorList>
    </citation>
    <scope>NUCLEOTIDE SEQUENCE [GENOMIC DNA]</scope>
    <source>
        <strain>OU83</strain>
    </source>
</reference>